<reference key="1">
    <citation type="journal article" date="2002" name="Genome Res.">
        <title>The genome of Methanosarcina acetivorans reveals extensive metabolic and physiological diversity.</title>
        <authorList>
            <person name="Galagan J.E."/>
            <person name="Nusbaum C."/>
            <person name="Roy A."/>
            <person name="Endrizzi M.G."/>
            <person name="Macdonald P."/>
            <person name="FitzHugh W."/>
            <person name="Calvo S."/>
            <person name="Engels R."/>
            <person name="Smirnov S."/>
            <person name="Atnoor D."/>
            <person name="Brown A."/>
            <person name="Allen N."/>
            <person name="Naylor J."/>
            <person name="Stange-Thomann N."/>
            <person name="DeArellano K."/>
            <person name="Johnson R."/>
            <person name="Linton L."/>
            <person name="McEwan P."/>
            <person name="McKernan K."/>
            <person name="Talamas J."/>
            <person name="Tirrell A."/>
            <person name="Ye W."/>
            <person name="Zimmer A."/>
            <person name="Barber R.D."/>
            <person name="Cann I."/>
            <person name="Graham D.E."/>
            <person name="Grahame D.A."/>
            <person name="Guss A.M."/>
            <person name="Hedderich R."/>
            <person name="Ingram-Smith C."/>
            <person name="Kuettner H.C."/>
            <person name="Krzycki J.A."/>
            <person name="Leigh J.A."/>
            <person name="Li W."/>
            <person name="Liu J."/>
            <person name="Mukhopadhyay B."/>
            <person name="Reeve J.N."/>
            <person name="Smith K."/>
            <person name="Springer T.A."/>
            <person name="Umayam L.A."/>
            <person name="White O."/>
            <person name="White R.H."/>
            <person name="de Macario E.C."/>
            <person name="Ferry J.G."/>
            <person name="Jarrell K.F."/>
            <person name="Jing H."/>
            <person name="Macario A.J.L."/>
            <person name="Paulsen I.T."/>
            <person name="Pritchett M."/>
            <person name="Sowers K.R."/>
            <person name="Swanson R.V."/>
            <person name="Zinder S.H."/>
            <person name="Lander E."/>
            <person name="Metcalf W.W."/>
            <person name="Birren B."/>
        </authorList>
    </citation>
    <scope>NUCLEOTIDE SEQUENCE [LARGE SCALE GENOMIC DNA]</scope>
    <source>
        <strain>ATCC 35395 / DSM 2834 / JCM 12185 / C2A</strain>
    </source>
</reference>
<feature type="chain" id="PRO_0000147682" description="tRNA (guanine(26)-N(2))-dimethyltransferase">
    <location>
        <begin position="1"/>
        <end position="388"/>
    </location>
</feature>
<feature type="domain" description="Trm1 methyltransferase" evidence="1">
    <location>
        <begin position="4"/>
        <end position="383"/>
    </location>
</feature>
<feature type="binding site" evidence="1">
    <location>
        <position position="41"/>
    </location>
    <ligand>
        <name>S-adenosyl-L-methionine</name>
        <dbReference type="ChEBI" id="CHEBI:59789"/>
    </ligand>
</feature>
<feature type="binding site" evidence="1">
    <location>
        <position position="78"/>
    </location>
    <ligand>
        <name>S-adenosyl-L-methionine</name>
        <dbReference type="ChEBI" id="CHEBI:59789"/>
    </ligand>
</feature>
<feature type="binding site" evidence="1">
    <location>
        <position position="94"/>
    </location>
    <ligand>
        <name>S-adenosyl-L-methionine</name>
        <dbReference type="ChEBI" id="CHEBI:59789"/>
    </ligand>
</feature>
<feature type="binding site" evidence="1">
    <location>
        <position position="123"/>
    </location>
    <ligand>
        <name>S-adenosyl-L-methionine</name>
        <dbReference type="ChEBI" id="CHEBI:59789"/>
    </ligand>
</feature>
<feature type="binding site" evidence="1">
    <location>
        <position position="251"/>
    </location>
    <ligand>
        <name>Zn(2+)</name>
        <dbReference type="ChEBI" id="CHEBI:29105"/>
    </ligand>
</feature>
<feature type="binding site" evidence="1">
    <location>
        <position position="254"/>
    </location>
    <ligand>
        <name>Zn(2+)</name>
        <dbReference type="ChEBI" id="CHEBI:29105"/>
    </ligand>
</feature>
<feature type="binding site" evidence="1">
    <location>
        <position position="271"/>
    </location>
    <ligand>
        <name>Zn(2+)</name>
        <dbReference type="ChEBI" id="CHEBI:29105"/>
    </ligand>
</feature>
<feature type="binding site" evidence="1">
    <location>
        <position position="274"/>
    </location>
    <ligand>
        <name>Zn(2+)</name>
        <dbReference type="ChEBI" id="CHEBI:29105"/>
    </ligand>
</feature>
<organism>
    <name type="scientific">Methanosarcina acetivorans (strain ATCC 35395 / DSM 2834 / JCM 12185 / C2A)</name>
    <dbReference type="NCBI Taxonomy" id="188937"/>
    <lineage>
        <taxon>Archaea</taxon>
        <taxon>Methanobacteriati</taxon>
        <taxon>Methanobacteriota</taxon>
        <taxon>Stenosarchaea group</taxon>
        <taxon>Methanomicrobia</taxon>
        <taxon>Methanosarcinales</taxon>
        <taxon>Methanosarcinaceae</taxon>
        <taxon>Methanosarcina</taxon>
    </lineage>
</organism>
<name>TRM1_METAC</name>
<protein>
    <recommendedName>
        <fullName evidence="1">tRNA (guanine(26)-N(2))-dimethyltransferase</fullName>
        <ecNumber evidence="1">2.1.1.216</ecNumber>
    </recommendedName>
    <alternativeName>
        <fullName evidence="1">tRNA 2,2-dimethylguanosine-26 methyltransferase</fullName>
    </alternativeName>
    <alternativeName>
        <fullName evidence="1">tRNA(guanine-26,N(2)-N(2)) methyltransferase</fullName>
    </alternativeName>
    <alternativeName>
        <fullName evidence="1">tRNA(m(2,2)G26)dimethyltransferase</fullName>
    </alternativeName>
</protein>
<sequence length="388" mass="42510">MICRTIVEGTTKISVPIPPPDVNFPPSAAPVFYNPEMELNRDINVAATAAFVKRLLSRKDLKREEVRYVDAFSASGIRGLRIAGEVGIHSTMNDWNPEAFELIKENIKINGLEEKAQATRKNANVLLHEQKFHIVDVDPFGTPAPYLDAAATAAQGMLSVTATDTAPLCGAHLNSGIRKYAAVPLNTEYHSEMGLRVLLGACARECAKHEKGMLPLLSHVTRHYVRSYLEVLPGTKHADRALKSMGFSIYCPKCGFRGPVYGLAVHIEKECPACGALTKIAGPLWLGPFREPKFCNEVLSELEAHPLNTKEKAKKIITFCRDELDIPMFYDQHVICKELGASATGIETLIEALKAGGFEASRTHFSGTSFRTDAPIAEIKKIIQALSG</sequence>
<dbReference type="EC" id="2.1.1.216" evidence="1"/>
<dbReference type="EMBL" id="AE010299">
    <property type="protein sequence ID" value="AAM04869.1"/>
    <property type="molecule type" value="Genomic_DNA"/>
</dbReference>
<dbReference type="RefSeq" id="WP_011021469.1">
    <property type="nucleotide sequence ID" value="NC_003552.1"/>
</dbReference>
<dbReference type="SMR" id="Q8TGX6"/>
<dbReference type="FunCoup" id="Q8TGX6">
    <property type="interactions" value="207"/>
</dbReference>
<dbReference type="STRING" id="188937.MA_1455"/>
<dbReference type="EnsemblBacteria" id="AAM04869">
    <property type="protein sequence ID" value="AAM04869"/>
    <property type="gene ID" value="MA_1455"/>
</dbReference>
<dbReference type="GeneID" id="1473343"/>
<dbReference type="KEGG" id="mac:MA_1455"/>
<dbReference type="HOGENOM" id="CLU_010862_5_1_2"/>
<dbReference type="InParanoid" id="Q8TGX6"/>
<dbReference type="OrthoDB" id="372177at2157"/>
<dbReference type="PhylomeDB" id="Q8TGX6"/>
<dbReference type="Proteomes" id="UP000002487">
    <property type="component" value="Chromosome"/>
</dbReference>
<dbReference type="GO" id="GO:0160104">
    <property type="term" value="F:tRNA (guanine(26)-N2)-dimethyltransferase activity"/>
    <property type="evidence" value="ECO:0007669"/>
    <property type="project" value="UniProtKB-UniRule"/>
</dbReference>
<dbReference type="GO" id="GO:0000049">
    <property type="term" value="F:tRNA binding"/>
    <property type="evidence" value="ECO:0007669"/>
    <property type="project" value="UniProtKB-KW"/>
</dbReference>
<dbReference type="GO" id="GO:0002940">
    <property type="term" value="P:tRNA N2-guanine methylation"/>
    <property type="evidence" value="ECO:0000318"/>
    <property type="project" value="GO_Central"/>
</dbReference>
<dbReference type="CDD" id="cd02440">
    <property type="entry name" value="AdoMet_MTases"/>
    <property type="match status" value="1"/>
</dbReference>
<dbReference type="Gene3D" id="3.30.56.70">
    <property type="entry name" value="N2,N2-dimethylguanosine tRNA methyltransferase, C-terminal domain"/>
    <property type="match status" value="1"/>
</dbReference>
<dbReference type="Gene3D" id="3.40.50.150">
    <property type="entry name" value="Vaccinia Virus protein VP39"/>
    <property type="match status" value="1"/>
</dbReference>
<dbReference type="HAMAP" id="MF_00290">
    <property type="entry name" value="tRNA_dimethyltr_TRM1"/>
    <property type="match status" value="1"/>
</dbReference>
<dbReference type="InterPro" id="IPR029063">
    <property type="entry name" value="SAM-dependent_MTases_sf"/>
</dbReference>
<dbReference type="InterPro" id="IPR002905">
    <property type="entry name" value="Trm1"/>
</dbReference>
<dbReference type="InterPro" id="IPR022923">
    <property type="entry name" value="TRM1_arc_bac"/>
</dbReference>
<dbReference type="InterPro" id="IPR042296">
    <property type="entry name" value="tRNA_met_Trm1_C"/>
</dbReference>
<dbReference type="NCBIfam" id="TIGR00308">
    <property type="entry name" value="TRM1"/>
    <property type="match status" value="1"/>
</dbReference>
<dbReference type="PANTHER" id="PTHR10631">
    <property type="entry name" value="N 2 ,N 2 -DIMETHYLGUANOSINE TRNA METHYLTRANSFERASE"/>
    <property type="match status" value="1"/>
</dbReference>
<dbReference type="PANTHER" id="PTHR10631:SF3">
    <property type="entry name" value="TRNA (GUANINE(26)-N(2))-DIMETHYLTRANSFERASE"/>
    <property type="match status" value="1"/>
</dbReference>
<dbReference type="Pfam" id="PF02005">
    <property type="entry name" value="TRM"/>
    <property type="match status" value="1"/>
</dbReference>
<dbReference type="SUPFAM" id="SSF53335">
    <property type="entry name" value="S-adenosyl-L-methionine-dependent methyltransferases"/>
    <property type="match status" value="1"/>
</dbReference>
<dbReference type="PROSITE" id="PS51626">
    <property type="entry name" value="SAM_MT_TRM1"/>
    <property type="match status" value="1"/>
</dbReference>
<evidence type="ECO:0000255" key="1">
    <source>
        <dbReference type="HAMAP-Rule" id="MF_00290"/>
    </source>
</evidence>
<proteinExistence type="inferred from homology"/>
<keyword id="KW-0479">Metal-binding</keyword>
<keyword id="KW-0489">Methyltransferase</keyword>
<keyword id="KW-1185">Reference proteome</keyword>
<keyword id="KW-0694">RNA-binding</keyword>
<keyword id="KW-0949">S-adenosyl-L-methionine</keyword>
<keyword id="KW-0808">Transferase</keyword>
<keyword id="KW-0819">tRNA processing</keyword>
<keyword id="KW-0820">tRNA-binding</keyword>
<keyword id="KW-0862">Zinc</keyword>
<gene>
    <name evidence="1" type="primary">trm1</name>
    <name type="ordered locus">MA_1455</name>
</gene>
<accession>Q8TGX6</accession>
<comment type="function">
    <text evidence="1">Dimethylates a single guanine residue at position 26 of a number of tRNAs using S-adenosyl-L-methionine as donor of the methyl groups.</text>
</comment>
<comment type="catalytic activity">
    <reaction evidence="1">
        <text>guanosine(26) in tRNA + 2 S-adenosyl-L-methionine = N(2)-dimethylguanosine(26) in tRNA + 2 S-adenosyl-L-homocysteine + 2 H(+)</text>
        <dbReference type="Rhea" id="RHEA:43140"/>
        <dbReference type="Rhea" id="RHEA-COMP:10359"/>
        <dbReference type="Rhea" id="RHEA-COMP:10360"/>
        <dbReference type="ChEBI" id="CHEBI:15378"/>
        <dbReference type="ChEBI" id="CHEBI:57856"/>
        <dbReference type="ChEBI" id="CHEBI:59789"/>
        <dbReference type="ChEBI" id="CHEBI:74269"/>
        <dbReference type="ChEBI" id="CHEBI:74513"/>
        <dbReference type="EC" id="2.1.1.216"/>
    </reaction>
</comment>
<comment type="similarity">
    <text evidence="1">Belongs to the class I-like SAM-binding methyltransferase superfamily. Trm1 family.</text>
</comment>